<accession>Q1CME1</accession>
<accession>C4GP65</accession>
<reference key="1">
    <citation type="journal article" date="2006" name="J. Bacteriol.">
        <title>Complete genome sequence of Yersinia pestis strains Antiqua and Nepal516: evidence of gene reduction in an emerging pathogen.</title>
        <authorList>
            <person name="Chain P.S.G."/>
            <person name="Hu P."/>
            <person name="Malfatti S.A."/>
            <person name="Radnedge L."/>
            <person name="Larimer F."/>
            <person name="Vergez L.M."/>
            <person name="Worsham P."/>
            <person name="Chu M.C."/>
            <person name="Andersen G.L."/>
        </authorList>
    </citation>
    <scope>NUCLEOTIDE SEQUENCE [LARGE SCALE GENOMIC DNA]</scope>
    <source>
        <strain>Nepal516</strain>
    </source>
</reference>
<reference key="2">
    <citation type="submission" date="2009-04" db="EMBL/GenBank/DDBJ databases">
        <title>Yersinia pestis Nepal516A whole genome shotgun sequencing project.</title>
        <authorList>
            <person name="Plunkett G. III"/>
            <person name="Anderson B.D."/>
            <person name="Baumler D.J."/>
            <person name="Burland V."/>
            <person name="Cabot E.L."/>
            <person name="Glasner J.D."/>
            <person name="Mau B."/>
            <person name="Neeno-Eckwall E."/>
            <person name="Perna N.T."/>
            <person name="Munk A.C."/>
            <person name="Tapia R."/>
            <person name="Green L.D."/>
            <person name="Rogers Y.C."/>
            <person name="Detter J.C."/>
            <person name="Bruce D.C."/>
            <person name="Brettin T.S."/>
        </authorList>
    </citation>
    <scope>NUCLEOTIDE SEQUENCE [LARGE SCALE GENOMIC DNA]</scope>
    <source>
        <strain>Nepal516</strain>
    </source>
</reference>
<feature type="chain" id="PRO_1000064242" description="Glycerol-3-phosphate acyltransferase">
    <location>
        <begin position="1"/>
        <end position="216"/>
    </location>
</feature>
<feature type="transmembrane region" description="Helical" evidence="1">
    <location>
        <begin position="4"/>
        <end position="24"/>
    </location>
</feature>
<feature type="transmembrane region" description="Helical" evidence="1">
    <location>
        <begin position="56"/>
        <end position="76"/>
    </location>
</feature>
<feature type="transmembrane region" description="Helical" evidence="1">
    <location>
        <begin position="80"/>
        <end position="100"/>
    </location>
</feature>
<feature type="transmembrane region" description="Helical" evidence="1">
    <location>
        <begin position="112"/>
        <end position="132"/>
    </location>
</feature>
<feature type="transmembrane region" description="Helical" evidence="1">
    <location>
        <begin position="138"/>
        <end position="158"/>
    </location>
</feature>
<name>PLSY_YERPN</name>
<proteinExistence type="inferred from homology"/>
<dbReference type="EC" id="2.3.1.275" evidence="1"/>
<dbReference type="EMBL" id="CP000305">
    <property type="protein sequence ID" value="ABG16839.1"/>
    <property type="molecule type" value="Genomic_DNA"/>
</dbReference>
<dbReference type="EMBL" id="ACNQ01000006">
    <property type="protein sequence ID" value="EEO78297.1"/>
    <property type="molecule type" value="Genomic_DNA"/>
</dbReference>
<dbReference type="RefSeq" id="WP_002217581.1">
    <property type="nucleotide sequence ID" value="NZ_ACNQ01000006.1"/>
</dbReference>
<dbReference type="SMR" id="Q1CME1"/>
<dbReference type="GeneID" id="57973977"/>
<dbReference type="KEGG" id="ypn:YPN_0507"/>
<dbReference type="HOGENOM" id="CLU_081254_0_2_6"/>
<dbReference type="UniPathway" id="UPA00085"/>
<dbReference type="Proteomes" id="UP000008936">
    <property type="component" value="Chromosome"/>
</dbReference>
<dbReference type="GO" id="GO:0005886">
    <property type="term" value="C:plasma membrane"/>
    <property type="evidence" value="ECO:0007669"/>
    <property type="project" value="UniProtKB-SubCell"/>
</dbReference>
<dbReference type="GO" id="GO:0043772">
    <property type="term" value="F:acyl-phosphate glycerol-3-phosphate acyltransferase activity"/>
    <property type="evidence" value="ECO:0007669"/>
    <property type="project" value="UniProtKB-UniRule"/>
</dbReference>
<dbReference type="GO" id="GO:0008654">
    <property type="term" value="P:phospholipid biosynthetic process"/>
    <property type="evidence" value="ECO:0007669"/>
    <property type="project" value="UniProtKB-UniRule"/>
</dbReference>
<dbReference type="HAMAP" id="MF_01043">
    <property type="entry name" value="PlsY"/>
    <property type="match status" value="1"/>
</dbReference>
<dbReference type="InterPro" id="IPR003811">
    <property type="entry name" value="G3P_acylTferase_PlsY"/>
</dbReference>
<dbReference type="NCBIfam" id="TIGR00023">
    <property type="entry name" value="glycerol-3-phosphate 1-O-acyltransferase PlsY"/>
    <property type="match status" value="1"/>
</dbReference>
<dbReference type="PANTHER" id="PTHR30309:SF0">
    <property type="entry name" value="GLYCEROL-3-PHOSPHATE ACYLTRANSFERASE-RELATED"/>
    <property type="match status" value="1"/>
</dbReference>
<dbReference type="PANTHER" id="PTHR30309">
    <property type="entry name" value="INNER MEMBRANE PROTEIN YGIH"/>
    <property type="match status" value="1"/>
</dbReference>
<dbReference type="Pfam" id="PF02660">
    <property type="entry name" value="G3P_acyltransf"/>
    <property type="match status" value="1"/>
</dbReference>
<dbReference type="SMART" id="SM01207">
    <property type="entry name" value="G3P_acyltransf"/>
    <property type="match status" value="1"/>
</dbReference>
<gene>
    <name evidence="1" type="primary">plsY</name>
    <name type="ordered locus">YPN_0507</name>
    <name type="ORF">YP516_0526</name>
</gene>
<organism>
    <name type="scientific">Yersinia pestis bv. Antiqua (strain Nepal516)</name>
    <dbReference type="NCBI Taxonomy" id="377628"/>
    <lineage>
        <taxon>Bacteria</taxon>
        <taxon>Pseudomonadati</taxon>
        <taxon>Pseudomonadota</taxon>
        <taxon>Gammaproteobacteria</taxon>
        <taxon>Enterobacterales</taxon>
        <taxon>Yersiniaceae</taxon>
        <taxon>Yersinia</taxon>
    </lineage>
</organism>
<comment type="function">
    <text evidence="1">Catalyzes the transfer of an acyl group from acyl-phosphate (acyl-PO(4)) to glycerol-3-phosphate (G3P) to form lysophosphatidic acid (LPA). This enzyme utilizes acyl-phosphate as fatty acyl donor, but not acyl-CoA or acyl-ACP.</text>
</comment>
<comment type="catalytic activity">
    <reaction evidence="1">
        <text>an acyl phosphate + sn-glycerol 3-phosphate = a 1-acyl-sn-glycero-3-phosphate + phosphate</text>
        <dbReference type="Rhea" id="RHEA:34075"/>
        <dbReference type="ChEBI" id="CHEBI:43474"/>
        <dbReference type="ChEBI" id="CHEBI:57597"/>
        <dbReference type="ChEBI" id="CHEBI:57970"/>
        <dbReference type="ChEBI" id="CHEBI:59918"/>
        <dbReference type="EC" id="2.3.1.275"/>
    </reaction>
</comment>
<comment type="pathway">
    <text evidence="1">Lipid metabolism; phospholipid metabolism.</text>
</comment>
<comment type="subunit">
    <text evidence="1">Probably interacts with PlsX.</text>
</comment>
<comment type="subcellular location">
    <subcellularLocation>
        <location evidence="1">Cell inner membrane</location>
        <topology evidence="1">Multi-pass membrane protein</topology>
    </subcellularLocation>
</comment>
<comment type="similarity">
    <text evidence="1">Belongs to the PlsY family.</text>
</comment>
<keyword id="KW-0997">Cell inner membrane</keyword>
<keyword id="KW-1003">Cell membrane</keyword>
<keyword id="KW-0444">Lipid biosynthesis</keyword>
<keyword id="KW-0443">Lipid metabolism</keyword>
<keyword id="KW-0472">Membrane</keyword>
<keyword id="KW-0594">Phospholipid biosynthesis</keyword>
<keyword id="KW-1208">Phospholipid metabolism</keyword>
<keyword id="KW-0808">Transferase</keyword>
<keyword id="KW-0812">Transmembrane</keyword>
<keyword id="KW-1133">Transmembrane helix</keyword>
<protein>
    <recommendedName>
        <fullName evidence="1">Glycerol-3-phosphate acyltransferase</fullName>
    </recommendedName>
    <alternativeName>
        <fullName evidence="1">Acyl-PO4 G3P acyltransferase</fullName>
    </alternativeName>
    <alternativeName>
        <fullName evidence="1">Acyl-phosphate--glycerol-3-phosphate acyltransferase</fullName>
    </alternativeName>
    <alternativeName>
        <fullName evidence="1">G3P acyltransferase</fullName>
        <shortName evidence="1">GPAT</shortName>
        <ecNumber evidence="1">2.3.1.275</ecNumber>
    </alternativeName>
    <alternativeName>
        <fullName evidence="1">Lysophosphatidic acid synthase</fullName>
        <shortName evidence="1">LPA synthase</shortName>
    </alternativeName>
</protein>
<evidence type="ECO:0000255" key="1">
    <source>
        <dbReference type="HAMAP-Rule" id="MF_01043"/>
    </source>
</evidence>
<sequence length="216" mass="23620">MSAIALGMIIFAYLCGSISSAILVCRVARLPDPRTHGSGNPGATNVLRIGGRTAAVAVLLFDILKGMLPVWIAYLLHIPPLYLGLTAIAACLGHIYPVFFHFKGGKGVATAFGAIAPIGWDLTGLMTGTWLLTVLLSGYSSLGAIVSALIAPFYVWWFKPQFTFPVAMLSCLILMRHHDNIQRLWRGKEGKIWDKLRKKKQKTPAEEAAELEEKED</sequence>